<gene>
    <name type="ordered locus">MG308</name>
</gene>
<feature type="chain" id="PRO_0000055112" description="Probable ATP-dependent RNA helicase MG308">
    <location>
        <begin position="1"/>
        <end position="410"/>
    </location>
</feature>
<feature type="domain" description="Helicase ATP-binding" evidence="1">
    <location>
        <begin position="26"/>
        <end position="179"/>
    </location>
</feature>
<feature type="domain" description="Helicase C-terminal" evidence="2">
    <location>
        <begin position="190"/>
        <end position="357"/>
    </location>
</feature>
<feature type="short sequence motif" description="DEID box">
    <location>
        <begin position="126"/>
        <end position="129"/>
    </location>
</feature>
<feature type="binding site" evidence="1">
    <location>
        <begin position="39"/>
        <end position="46"/>
    </location>
    <ligand>
        <name>ATP</name>
        <dbReference type="ChEBI" id="CHEBI:30616"/>
    </ligand>
</feature>
<keyword id="KW-0067">ATP-binding</keyword>
<keyword id="KW-0347">Helicase</keyword>
<keyword id="KW-0378">Hydrolase</keyword>
<keyword id="KW-0547">Nucleotide-binding</keyword>
<keyword id="KW-1185">Reference proteome</keyword>
<keyword id="KW-0694">RNA-binding</keyword>
<sequence>MQFSSSIRQFLDKKRIVEFTKIQQAVFKLWPFQNIIGIAETGSGKTFAYLLPLLDKINTSLDQPQAVIFVPTKELQWQIINILTEIKKYFKTFTFATSFSSKAQLIVSLLNEKYLFTSKVRYVVFDEIDMFLEQSSIQQWLECVHLFQKAKPLFAFFSATLFNQQLQIIKKQVINTKVINLHPKQWIHPLVKHFVVHLNTENRFSGLLALLKHHQNQQIIVFCSNQKSLKQLTQLLSNNNISFGSIYGSLTYQERKNNFTKATNNKLKLLVVSDLFSRGIDLNYFSVVISWDLPKIDSFYIHRSGRVARLNSWGRSYLFWNDQNQSKLNKLIAKGIKFQNVSLTSNGDLKFLTENNQKTTKKPLSTLQIKKIKAIKAKYKKVKPNYKKYQKQQIQNLLINKKKPRSWKNF</sequence>
<evidence type="ECO:0000255" key="1">
    <source>
        <dbReference type="PROSITE-ProRule" id="PRU00541"/>
    </source>
</evidence>
<evidence type="ECO:0000255" key="2">
    <source>
        <dbReference type="PROSITE-ProRule" id="PRU00542"/>
    </source>
</evidence>
<evidence type="ECO:0000305" key="3"/>
<comment type="catalytic activity">
    <reaction>
        <text>ATP + H2O = ADP + phosphate + H(+)</text>
        <dbReference type="Rhea" id="RHEA:13065"/>
        <dbReference type="ChEBI" id="CHEBI:15377"/>
        <dbReference type="ChEBI" id="CHEBI:15378"/>
        <dbReference type="ChEBI" id="CHEBI:30616"/>
        <dbReference type="ChEBI" id="CHEBI:43474"/>
        <dbReference type="ChEBI" id="CHEBI:456216"/>
        <dbReference type="EC" id="3.6.4.13"/>
    </reaction>
</comment>
<comment type="similarity">
    <text evidence="3">Belongs to the DEAD box helicase family.</text>
</comment>
<name>Y308_MYCGE</name>
<reference key="1">
    <citation type="journal article" date="1995" name="Science">
        <title>The minimal gene complement of Mycoplasma genitalium.</title>
        <authorList>
            <person name="Fraser C.M."/>
            <person name="Gocayne J.D."/>
            <person name="White O."/>
            <person name="Adams M.D."/>
            <person name="Clayton R.A."/>
            <person name="Fleischmann R.D."/>
            <person name="Bult C.J."/>
            <person name="Kerlavage A.R."/>
            <person name="Sutton G.G."/>
            <person name="Kelley J.M."/>
            <person name="Fritchman J.L."/>
            <person name="Weidman J.F."/>
            <person name="Small K.V."/>
            <person name="Sandusky M."/>
            <person name="Fuhrmann J.L."/>
            <person name="Nguyen D.T."/>
            <person name="Utterback T.R."/>
            <person name="Saudek D.M."/>
            <person name="Phillips C.A."/>
            <person name="Merrick J.M."/>
            <person name="Tomb J.-F."/>
            <person name="Dougherty B.A."/>
            <person name="Bott K.F."/>
            <person name="Hu P.-C."/>
            <person name="Lucier T.S."/>
            <person name="Peterson S.N."/>
            <person name="Smith H.O."/>
            <person name="Hutchison C.A. III"/>
            <person name="Venter J.C."/>
        </authorList>
    </citation>
    <scope>NUCLEOTIDE SEQUENCE [LARGE SCALE GENOMIC DNA]</scope>
    <source>
        <strain>ATCC 33530 / DSM 19775 / NCTC 10195 / G37</strain>
    </source>
</reference>
<reference key="2">
    <citation type="journal article" date="1993" name="J. Bacteriol.">
        <title>A survey of the Mycoplasma genitalium genome by using random sequencing.</title>
        <authorList>
            <person name="Peterson S.N."/>
            <person name="Hu P.-C."/>
            <person name="Bott K.F."/>
            <person name="Hutchison C.A. III"/>
        </authorList>
    </citation>
    <scope>NUCLEOTIDE SEQUENCE [GENOMIC DNA] OF 1-29</scope>
    <source>
        <strain>ATCC 33530 / DSM 19775 / NCTC 10195 / G37</strain>
    </source>
</reference>
<organism>
    <name type="scientific">Mycoplasma genitalium (strain ATCC 33530 / DSM 19775 / NCTC 10195 / G37)</name>
    <name type="common">Mycoplasmoides genitalium</name>
    <dbReference type="NCBI Taxonomy" id="243273"/>
    <lineage>
        <taxon>Bacteria</taxon>
        <taxon>Bacillati</taxon>
        <taxon>Mycoplasmatota</taxon>
        <taxon>Mycoplasmoidales</taxon>
        <taxon>Mycoplasmoidaceae</taxon>
        <taxon>Mycoplasmoides</taxon>
    </lineage>
</organism>
<accession>P52271</accession>
<dbReference type="EC" id="3.6.4.13"/>
<dbReference type="EMBL" id="L43967">
    <property type="protein sequence ID" value="AAC71530.1"/>
    <property type="molecule type" value="Genomic_DNA"/>
</dbReference>
<dbReference type="EMBL" id="U02200">
    <property type="protein sequence ID" value="AAD12489.1"/>
    <property type="molecule type" value="Genomic_DNA"/>
</dbReference>
<dbReference type="PIR" id="A64234">
    <property type="entry name" value="A64234"/>
</dbReference>
<dbReference type="RefSeq" id="WP_010869422.1">
    <property type="nucleotide sequence ID" value="NC_000908.2"/>
</dbReference>
<dbReference type="SMR" id="P52271"/>
<dbReference type="STRING" id="243273.MG_308"/>
<dbReference type="GeneID" id="88282471"/>
<dbReference type="KEGG" id="mge:MG_308"/>
<dbReference type="eggNOG" id="COG0513">
    <property type="taxonomic scope" value="Bacteria"/>
</dbReference>
<dbReference type="HOGENOM" id="CLU_003041_1_3_14"/>
<dbReference type="InParanoid" id="P52271"/>
<dbReference type="OrthoDB" id="9805696at2"/>
<dbReference type="BioCyc" id="MGEN243273:G1GJ2-377-MONOMER"/>
<dbReference type="Proteomes" id="UP000000807">
    <property type="component" value="Chromosome"/>
</dbReference>
<dbReference type="GO" id="GO:0005829">
    <property type="term" value="C:cytosol"/>
    <property type="evidence" value="ECO:0000318"/>
    <property type="project" value="GO_Central"/>
</dbReference>
<dbReference type="GO" id="GO:0005524">
    <property type="term" value="F:ATP binding"/>
    <property type="evidence" value="ECO:0007669"/>
    <property type="project" value="UniProtKB-KW"/>
</dbReference>
<dbReference type="GO" id="GO:0016887">
    <property type="term" value="F:ATP hydrolysis activity"/>
    <property type="evidence" value="ECO:0007669"/>
    <property type="project" value="RHEA"/>
</dbReference>
<dbReference type="GO" id="GO:0003723">
    <property type="term" value="F:RNA binding"/>
    <property type="evidence" value="ECO:0007669"/>
    <property type="project" value="UniProtKB-KW"/>
</dbReference>
<dbReference type="GO" id="GO:0003724">
    <property type="term" value="F:RNA helicase activity"/>
    <property type="evidence" value="ECO:0000318"/>
    <property type="project" value="GO_Central"/>
</dbReference>
<dbReference type="CDD" id="cd18787">
    <property type="entry name" value="SF2_C_DEAD"/>
    <property type="match status" value="1"/>
</dbReference>
<dbReference type="Gene3D" id="3.40.50.300">
    <property type="entry name" value="P-loop containing nucleotide triphosphate hydrolases"/>
    <property type="match status" value="2"/>
</dbReference>
<dbReference type="InterPro" id="IPR011545">
    <property type="entry name" value="DEAD/DEAH_box_helicase_dom"/>
</dbReference>
<dbReference type="InterPro" id="IPR050079">
    <property type="entry name" value="DEAD_box_RNA_helicase"/>
</dbReference>
<dbReference type="InterPro" id="IPR014001">
    <property type="entry name" value="Helicase_ATP-bd"/>
</dbReference>
<dbReference type="InterPro" id="IPR001650">
    <property type="entry name" value="Helicase_C-like"/>
</dbReference>
<dbReference type="InterPro" id="IPR027417">
    <property type="entry name" value="P-loop_NTPase"/>
</dbReference>
<dbReference type="PANTHER" id="PTHR47959:SF13">
    <property type="entry name" value="ATP-DEPENDENT RNA HELICASE RHLE"/>
    <property type="match status" value="1"/>
</dbReference>
<dbReference type="PANTHER" id="PTHR47959">
    <property type="entry name" value="ATP-DEPENDENT RNA HELICASE RHLE-RELATED"/>
    <property type="match status" value="1"/>
</dbReference>
<dbReference type="Pfam" id="PF00270">
    <property type="entry name" value="DEAD"/>
    <property type="match status" value="1"/>
</dbReference>
<dbReference type="Pfam" id="PF00271">
    <property type="entry name" value="Helicase_C"/>
    <property type="match status" value="1"/>
</dbReference>
<dbReference type="SMART" id="SM00487">
    <property type="entry name" value="DEXDc"/>
    <property type="match status" value="1"/>
</dbReference>
<dbReference type="SMART" id="SM00490">
    <property type="entry name" value="HELICc"/>
    <property type="match status" value="1"/>
</dbReference>
<dbReference type="SUPFAM" id="SSF52540">
    <property type="entry name" value="P-loop containing nucleoside triphosphate hydrolases"/>
    <property type="match status" value="1"/>
</dbReference>
<dbReference type="PROSITE" id="PS51192">
    <property type="entry name" value="HELICASE_ATP_BIND_1"/>
    <property type="match status" value="1"/>
</dbReference>
<dbReference type="PROSITE" id="PS51194">
    <property type="entry name" value="HELICASE_CTER"/>
    <property type="match status" value="1"/>
</dbReference>
<protein>
    <recommendedName>
        <fullName>Probable ATP-dependent RNA helicase MG308</fullName>
        <ecNumber>3.6.4.13</ecNumber>
    </recommendedName>
</protein>
<proteinExistence type="inferred from homology"/>